<sequence>MSQSYELTAEARERVGKGSARAIRRNGKIPAVIYGDKQPPLSITLPYKEVFLRIHAGGFRTTVATIDLNGEKIQVLPKDYQLDPVRGFAMHVDFLRVGKNTVVTVNVPVHFINDEKAPGIKRGGVLNIVRHEVEFTCPANAIPDFIEVDLTGLDIGDSVHISAVKLPEGIVPTITDRDFTIATVAAPAGLKSEGAEGGEAEAGQAEEGEE</sequence>
<proteinExistence type="inferred from homology"/>
<comment type="function">
    <text evidence="1">This is one of the proteins that binds to the 5S RNA in the ribosome where it forms part of the central protuberance.</text>
</comment>
<comment type="subunit">
    <text evidence="1">Part of the 50S ribosomal subunit; part of the 5S rRNA/L5/L18/L25 subcomplex. Contacts the 5S rRNA. Binds to the 5S rRNA independently of L5 and L18.</text>
</comment>
<comment type="similarity">
    <text evidence="1">Belongs to the bacterial ribosomal protein bL25 family. CTC subfamily.</text>
</comment>
<evidence type="ECO:0000255" key="1">
    <source>
        <dbReference type="HAMAP-Rule" id="MF_01334"/>
    </source>
</evidence>
<evidence type="ECO:0000256" key="2">
    <source>
        <dbReference type="SAM" id="MobiDB-lite"/>
    </source>
</evidence>
<evidence type="ECO:0000305" key="3"/>
<reference key="1">
    <citation type="submission" date="2006-06" db="EMBL/GenBank/DDBJ databases">
        <title>Complete sequence of chromosome of Mesorhizobium sp. BNC1.</title>
        <authorList>
            <consortium name="US DOE Joint Genome Institute"/>
            <person name="Copeland A."/>
            <person name="Lucas S."/>
            <person name="Lapidus A."/>
            <person name="Barry K."/>
            <person name="Detter J.C."/>
            <person name="Glavina del Rio T."/>
            <person name="Hammon N."/>
            <person name="Israni S."/>
            <person name="Dalin E."/>
            <person name="Tice H."/>
            <person name="Pitluck S."/>
            <person name="Chertkov O."/>
            <person name="Brettin T."/>
            <person name="Bruce D."/>
            <person name="Han C."/>
            <person name="Tapia R."/>
            <person name="Gilna P."/>
            <person name="Schmutz J."/>
            <person name="Larimer F."/>
            <person name="Land M."/>
            <person name="Hauser L."/>
            <person name="Kyrpides N."/>
            <person name="Mikhailova N."/>
            <person name="Richardson P."/>
        </authorList>
    </citation>
    <scope>NUCLEOTIDE SEQUENCE [LARGE SCALE GENOMIC DNA]</scope>
    <source>
        <strain>BNC1</strain>
    </source>
</reference>
<accession>Q11GC6</accession>
<feature type="chain" id="PRO_1000052903" description="Large ribosomal subunit protein bL25">
    <location>
        <begin position="1"/>
        <end position="210"/>
    </location>
</feature>
<feature type="region of interest" description="Disordered" evidence="2">
    <location>
        <begin position="190"/>
        <end position="210"/>
    </location>
</feature>
<feature type="compositionally biased region" description="Acidic residues" evidence="2">
    <location>
        <begin position="196"/>
        <end position="210"/>
    </location>
</feature>
<dbReference type="EMBL" id="CP000390">
    <property type="protein sequence ID" value="ABG63549.1"/>
    <property type="molecule type" value="Genomic_DNA"/>
</dbReference>
<dbReference type="SMR" id="Q11GC6"/>
<dbReference type="STRING" id="266779.Meso_2157"/>
<dbReference type="KEGG" id="mes:Meso_2157"/>
<dbReference type="eggNOG" id="COG1825">
    <property type="taxonomic scope" value="Bacteria"/>
</dbReference>
<dbReference type="HOGENOM" id="CLU_075939_0_0_5"/>
<dbReference type="OrthoDB" id="9806411at2"/>
<dbReference type="GO" id="GO:0022625">
    <property type="term" value="C:cytosolic large ribosomal subunit"/>
    <property type="evidence" value="ECO:0007669"/>
    <property type="project" value="TreeGrafter"/>
</dbReference>
<dbReference type="GO" id="GO:0008097">
    <property type="term" value="F:5S rRNA binding"/>
    <property type="evidence" value="ECO:0007669"/>
    <property type="project" value="InterPro"/>
</dbReference>
<dbReference type="GO" id="GO:0003735">
    <property type="term" value="F:structural constituent of ribosome"/>
    <property type="evidence" value="ECO:0007669"/>
    <property type="project" value="InterPro"/>
</dbReference>
<dbReference type="GO" id="GO:0006412">
    <property type="term" value="P:translation"/>
    <property type="evidence" value="ECO:0007669"/>
    <property type="project" value="UniProtKB-UniRule"/>
</dbReference>
<dbReference type="CDD" id="cd00495">
    <property type="entry name" value="Ribosomal_L25_TL5_CTC"/>
    <property type="match status" value="1"/>
</dbReference>
<dbReference type="Gene3D" id="2.170.120.20">
    <property type="entry name" value="Ribosomal protein L25, beta domain"/>
    <property type="match status" value="1"/>
</dbReference>
<dbReference type="Gene3D" id="2.40.240.10">
    <property type="entry name" value="Ribosomal Protein L25, Chain P"/>
    <property type="match status" value="1"/>
</dbReference>
<dbReference type="HAMAP" id="MF_01334">
    <property type="entry name" value="Ribosomal_bL25_CTC"/>
    <property type="match status" value="1"/>
</dbReference>
<dbReference type="InterPro" id="IPR020056">
    <property type="entry name" value="Rbsml_bL25/Gln-tRNA_synth_N"/>
</dbReference>
<dbReference type="InterPro" id="IPR011035">
    <property type="entry name" value="Ribosomal_bL25/Gln-tRNA_synth"/>
</dbReference>
<dbReference type="InterPro" id="IPR020057">
    <property type="entry name" value="Ribosomal_bL25_b-dom"/>
</dbReference>
<dbReference type="InterPro" id="IPR037121">
    <property type="entry name" value="Ribosomal_bL25_C"/>
</dbReference>
<dbReference type="InterPro" id="IPR001021">
    <property type="entry name" value="Ribosomal_bL25_long"/>
</dbReference>
<dbReference type="InterPro" id="IPR029751">
    <property type="entry name" value="Ribosomal_L25_dom"/>
</dbReference>
<dbReference type="InterPro" id="IPR020930">
    <property type="entry name" value="Ribosomal_uL5_bac-type"/>
</dbReference>
<dbReference type="NCBIfam" id="TIGR00731">
    <property type="entry name" value="bL25_bact_ctc"/>
    <property type="match status" value="1"/>
</dbReference>
<dbReference type="NCBIfam" id="NF004128">
    <property type="entry name" value="PRK05618.1-2"/>
    <property type="match status" value="1"/>
</dbReference>
<dbReference type="NCBIfam" id="NF004612">
    <property type="entry name" value="PRK05943.1"/>
    <property type="match status" value="1"/>
</dbReference>
<dbReference type="PANTHER" id="PTHR33284">
    <property type="entry name" value="RIBOSOMAL PROTEIN L25/GLN-TRNA SYNTHETASE, ANTI-CODON-BINDING DOMAIN-CONTAINING PROTEIN"/>
    <property type="match status" value="1"/>
</dbReference>
<dbReference type="PANTHER" id="PTHR33284:SF1">
    <property type="entry name" value="RIBOSOMAL PROTEIN L25_GLN-TRNA SYNTHETASE, ANTI-CODON-BINDING DOMAIN-CONTAINING PROTEIN"/>
    <property type="match status" value="1"/>
</dbReference>
<dbReference type="Pfam" id="PF01386">
    <property type="entry name" value="Ribosomal_L25p"/>
    <property type="match status" value="1"/>
</dbReference>
<dbReference type="Pfam" id="PF14693">
    <property type="entry name" value="Ribosomal_TL5_C"/>
    <property type="match status" value="1"/>
</dbReference>
<dbReference type="SUPFAM" id="SSF50715">
    <property type="entry name" value="Ribosomal protein L25-like"/>
    <property type="match status" value="1"/>
</dbReference>
<gene>
    <name evidence="1" type="primary">rplY</name>
    <name evidence="1" type="synonym">ctc</name>
    <name type="ordered locus">Meso_2157</name>
</gene>
<organism>
    <name type="scientific">Chelativorans sp. (strain BNC1)</name>
    <dbReference type="NCBI Taxonomy" id="266779"/>
    <lineage>
        <taxon>Bacteria</taxon>
        <taxon>Pseudomonadati</taxon>
        <taxon>Pseudomonadota</taxon>
        <taxon>Alphaproteobacteria</taxon>
        <taxon>Hyphomicrobiales</taxon>
        <taxon>Phyllobacteriaceae</taxon>
        <taxon>Chelativorans</taxon>
    </lineage>
</organism>
<protein>
    <recommendedName>
        <fullName evidence="1">Large ribosomal subunit protein bL25</fullName>
    </recommendedName>
    <alternativeName>
        <fullName evidence="3">50S ribosomal protein L25</fullName>
    </alternativeName>
    <alternativeName>
        <fullName evidence="1">General stress protein CTC</fullName>
    </alternativeName>
</protein>
<name>RL25_CHESB</name>
<keyword id="KW-0687">Ribonucleoprotein</keyword>
<keyword id="KW-0689">Ribosomal protein</keyword>
<keyword id="KW-0694">RNA-binding</keyword>
<keyword id="KW-0699">rRNA-binding</keyword>